<name>RHG06_MOUSE</name>
<gene>
    <name type="primary">Arhgap6</name>
</gene>
<keyword id="KW-0025">Alternative splicing</keyword>
<keyword id="KW-0963">Cytoplasm</keyword>
<keyword id="KW-0343">GTPase activation</keyword>
<keyword id="KW-0597">Phosphoprotein</keyword>
<keyword id="KW-1185">Reference proteome</keyword>
<keyword id="KW-0729">SH3-binding</keyword>
<feature type="chain" id="PRO_0000056705" description="Rho GTPase-activating protein 6">
    <location>
        <begin position="1"/>
        <end position="987"/>
    </location>
</feature>
<feature type="domain" description="Rho-GAP" evidence="3">
    <location>
        <begin position="403"/>
        <end position="604"/>
    </location>
</feature>
<feature type="region of interest" description="Disordered" evidence="4">
    <location>
        <begin position="1"/>
        <end position="60"/>
    </location>
</feature>
<feature type="region of interest" description="Disordered" evidence="4">
    <location>
        <begin position="76"/>
        <end position="117"/>
    </location>
</feature>
<feature type="region of interest" description="Disordered" evidence="4">
    <location>
        <begin position="144"/>
        <end position="170"/>
    </location>
</feature>
<feature type="region of interest" description="Disordered" evidence="4">
    <location>
        <begin position="324"/>
        <end position="363"/>
    </location>
</feature>
<feature type="region of interest" description="Disordered" evidence="4">
    <location>
        <begin position="641"/>
        <end position="676"/>
    </location>
</feature>
<feature type="region of interest" description="Disordered" evidence="4">
    <location>
        <begin position="709"/>
        <end position="731"/>
    </location>
</feature>
<feature type="region of interest" description="Disordered" evidence="4">
    <location>
        <begin position="825"/>
        <end position="847"/>
    </location>
</feature>
<feature type="region of interest" description="Disordered" evidence="4">
    <location>
        <begin position="863"/>
        <end position="953"/>
    </location>
</feature>
<feature type="short sequence motif" description="SH3-binding">
    <location>
        <begin position="344"/>
        <end position="354"/>
    </location>
</feature>
<feature type="compositionally biased region" description="Polar residues" evidence="4">
    <location>
        <begin position="1"/>
        <end position="21"/>
    </location>
</feature>
<feature type="compositionally biased region" description="Gly residues" evidence="4">
    <location>
        <begin position="44"/>
        <end position="57"/>
    </location>
</feature>
<feature type="compositionally biased region" description="Polar residues" evidence="4">
    <location>
        <begin position="100"/>
        <end position="115"/>
    </location>
</feature>
<feature type="compositionally biased region" description="Low complexity" evidence="4">
    <location>
        <begin position="144"/>
        <end position="159"/>
    </location>
</feature>
<feature type="compositionally biased region" description="Low complexity" evidence="4">
    <location>
        <begin position="328"/>
        <end position="350"/>
    </location>
</feature>
<feature type="compositionally biased region" description="Polar residues" evidence="4">
    <location>
        <begin position="658"/>
        <end position="676"/>
    </location>
</feature>
<feature type="compositionally biased region" description="Low complexity" evidence="4">
    <location>
        <begin position="939"/>
        <end position="948"/>
    </location>
</feature>
<feature type="site" description="Arginine finger; crucial for GTP hydrolysis by stabilizing the transition state" evidence="3">
    <location>
        <position position="435"/>
    </location>
</feature>
<feature type="modified residue" description="Phosphoserine" evidence="9">
    <location>
        <position position="37"/>
    </location>
</feature>
<feature type="modified residue" description="Phosphoserine" evidence="2">
    <location>
        <position position="265"/>
    </location>
</feature>
<feature type="modified residue" description="Phosphoserine" evidence="2">
    <location>
        <position position="365"/>
    </location>
</feature>
<feature type="modified residue" description="Phosphoserine" evidence="9">
    <location>
        <position position="669"/>
    </location>
</feature>
<feature type="modified residue" description="Phosphoserine" evidence="8 9">
    <location>
        <position position="675"/>
    </location>
</feature>
<feature type="modified residue" description="Phosphoserine" evidence="2">
    <location>
        <position position="682"/>
    </location>
</feature>
<feature type="modified residue" description="Phosphoserine" evidence="9">
    <location>
        <position position="713"/>
    </location>
</feature>
<feature type="modified residue" description="Phosphoserine" evidence="2">
    <location>
        <position position="758"/>
    </location>
</feature>
<feature type="modified residue" description="Phosphoserine" evidence="2">
    <location>
        <position position="776"/>
    </location>
</feature>
<feature type="modified residue" description="Phosphoserine" evidence="2">
    <location>
        <position position="781"/>
    </location>
</feature>
<feature type="modified residue" description="Phosphoserine" evidence="2">
    <location>
        <position position="790"/>
    </location>
</feature>
<feature type="modified residue" description="Phosphoserine" evidence="9">
    <location>
        <position position="824"/>
    </location>
</feature>
<feature type="modified residue" description="Phosphoserine" evidence="2">
    <location>
        <position position="941"/>
    </location>
</feature>
<feature type="modified residue" description="Phosphoserine" evidence="2">
    <location>
        <position position="944"/>
    </location>
</feature>
<feature type="splice variant" id="VSP_026051" description="In isoform 4." evidence="6">
    <original>MSAQSLLHSVFSCSSPASGGTASAKGFSKRKLRQTRSLDPALIGGCGSEMGAEGGLRGSTVSRLHSPQLLAEGLGSRLASSPRSQHLRATRFQTPRPLCSSFSTPSTPQEKSPSGSFHFDYEVPLSRSGLKKSMAWDLPSVLAGSGSASSRSPASILSSSGGGPNGIFSSPRRWLQQRKFQPPPNSRSHPYVVWRSE</original>
    <variation>MYKIF</variation>
    <location>
        <begin position="1"/>
        <end position="197"/>
    </location>
</feature>
<feature type="splice variant" id="VSP_026052" description="In isoform 3." evidence="6">
    <location>
        <begin position="1"/>
        <end position="58"/>
    </location>
</feature>
<feature type="splice variant" id="VSP_026053" description="In isoform 3." evidence="6">
    <original>STVSRLHSPQLLAEGLGSRLASSPRSQHLRATRFQTPRPLCSSFSTPSTPQEKSPSGSFHFDYEVPLSRSGLKKSMAWDLPSVLAGSGSASSRSPASILSSSGGGPNGIFSSPRRWLQQRKFQPPPNSRSHPYVVWRSE</original>
    <variation>MGDPSYSEKPRLHYA</variation>
    <location>
        <begin position="59"/>
        <end position="197"/>
    </location>
</feature>
<feature type="splice variant" id="VSP_001643" description="In isoform 2." evidence="5">
    <original>SPDILQTEVSFSMGGRHSSTDS</original>
    <variation>TSSVLPAAGQACSQSPASDFTP</variation>
    <location>
        <begin position="639"/>
        <end position="660"/>
    </location>
</feature>
<feature type="splice variant" id="VSP_001644" description="In isoform 2." evidence="5">
    <location>
        <begin position="661"/>
        <end position="987"/>
    </location>
</feature>
<feature type="sequence conflict" description="In Ref. 1; AAC53522/AAD55086." evidence="7" ref="1">
    <original>GSTVSR</original>
    <variation>AHSKP</variation>
    <location>
        <begin position="58"/>
        <end position="63"/>
    </location>
</feature>
<feature type="sequence conflict" description="In Ref. 1; AAC53522/AAD55086." evidence="7" ref="1">
    <original>K</original>
    <variation>N</variation>
    <location>
        <position position="111"/>
    </location>
</feature>
<feature type="sequence conflict" description="In Ref. 1; AAC53522/AAD55086." evidence="7" ref="1">
    <original>L</original>
    <variation>V</variation>
    <location>
        <position position="157"/>
    </location>
</feature>
<feature type="sequence conflict" description="In Ref. 1; AAC53522/AAD55086." evidence="7" ref="1">
    <original>K</original>
    <variation>N</variation>
    <location>
        <position position="262"/>
    </location>
</feature>
<feature type="sequence conflict" description="In Ref. 2; BAE38520." evidence="7" ref="2">
    <original>L</original>
    <variation>P</variation>
    <location>
        <position position="521"/>
    </location>
</feature>
<feature type="sequence conflict" description="In Ref. 2; BAE38520." evidence="7" ref="2">
    <original>S</original>
    <variation>P</variation>
    <location>
        <position position="580"/>
    </location>
</feature>
<feature type="sequence conflict" description="In Ref. 1; AAC53522/AAD55086." evidence="7" ref="1">
    <original>EA</original>
    <variation>DS</variation>
    <location>
        <begin position="601"/>
        <end position="602"/>
    </location>
</feature>
<feature type="sequence conflict" description="In Ref. 1; AAC53522." evidence="7" ref="1">
    <original>S</original>
    <variation>F</variation>
    <location>
        <position position="664"/>
    </location>
</feature>
<feature type="sequence conflict" description="In Ref. 1; AAC53522." evidence="7" ref="1">
    <original>P</original>
    <variation>S</variation>
    <location>
        <position position="723"/>
    </location>
</feature>
<feature type="sequence conflict" description="In Ref. 2; BAE38520." evidence="7" ref="2">
    <original>P</original>
    <variation>Q</variation>
    <location>
        <position position="753"/>
    </location>
</feature>
<accession>O54834</accession>
<accession>A2ABW4</accession>
<accession>A2AC55</accession>
<accession>Q3TMC2</accession>
<accession>Q8BG83</accession>
<accession>Q8C842</accession>
<accession>Q9QZL8</accession>
<protein>
    <recommendedName>
        <fullName>Rho GTPase-activating protein 6</fullName>
    </recommendedName>
    <alternativeName>
        <fullName>Rho-type GTPase-activating protein 6</fullName>
    </alternativeName>
    <alternativeName>
        <fullName>Rho-type GTPase-activating protein RhoGAPX-1</fullName>
    </alternativeName>
</protein>
<evidence type="ECO:0000250" key="1"/>
<evidence type="ECO:0000250" key="2">
    <source>
        <dbReference type="UniProtKB" id="O43182"/>
    </source>
</evidence>
<evidence type="ECO:0000255" key="3">
    <source>
        <dbReference type="PROSITE-ProRule" id="PRU00172"/>
    </source>
</evidence>
<evidence type="ECO:0000256" key="4">
    <source>
        <dbReference type="SAM" id="MobiDB-lite"/>
    </source>
</evidence>
<evidence type="ECO:0000303" key="5">
    <source>
    </source>
</evidence>
<evidence type="ECO:0000303" key="6">
    <source>
    </source>
</evidence>
<evidence type="ECO:0000305" key="7"/>
<evidence type="ECO:0007744" key="8">
    <source>
    </source>
</evidence>
<evidence type="ECO:0007744" key="9">
    <source>
    </source>
</evidence>
<proteinExistence type="evidence at protein level"/>
<comment type="function">
    <text evidence="1">GTPase activator for the Rho-type GTPases by converting them to an inactive GDP-bound state. Could regulate the interactions of signaling molecules with the actin cytoskeleton. Promotes continuous elongation of cytoplasmic processes during cell motility and simultaneous retraction of the cell body changing the cell morphology (By similarity).</text>
</comment>
<comment type="subcellular location">
    <subcellularLocation>
        <location evidence="7">Cytoplasm</location>
    </subcellularLocation>
</comment>
<comment type="alternative products">
    <event type="alternative splicing"/>
    <isoform>
        <id>O54834-1</id>
        <name>1</name>
        <sequence type="displayed"/>
    </isoform>
    <isoform>
        <id>O54834-2</id>
        <name>2</name>
        <sequence type="described" ref="VSP_001643 VSP_001644"/>
    </isoform>
    <isoform>
        <id>O54834-3</id>
        <name>3</name>
        <sequence type="described" ref="VSP_026052 VSP_026053"/>
    </isoform>
    <isoform>
        <id>O54834-4</id>
        <name>4</name>
        <sequence type="described" ref="VSP_026051"/>
    </isoform>
</comment>
<comment type="tissue specificity">
    <text>Expressed in retina and lung.</text>
</comment>
<comment type="sequence caution" evidence="7">
    <conflict type="erroneous initiation">
        <sequence resource="EMBL-CDS" id="BAC33263"/>
    </conflict>
</comment>
<comment type="sequence caution" evidence="7">
    <conflict type="erroneous initiation">
        <sequence resource="EMBL-CDS" id="BAC37093"/>
    </conflict>
</comment>
<organism>
    <name type="scientific">Mus musculus</name>
    <name type="common">Mouse</name>
    <dbReference type="NCBI Taxonomy" id="10090"/>
    <lineage>
        <taxon>Eukaryota</taxon>
        <taxon>Metazoa</taxon>
        <taxon>Chordata</taxon>
        <taxon>Craniata</taxon>
        <taxon>Vertebrata</taxon>
        <taxon>Euteleostomi</taxon>
        <taxon>Mammalia</taxon>
        <taxon>Eutheria</taxon>
        <taxon>Euarchontoglires</taxon>
        <taxon>Glires</taxon>
        <taxon>Rodentia</taxon>
        <taxon>Myomorpha</taxon>
        <taxon>Muroidea</taxon>
        <taxon>Muridae</taxon>
        <taxon>Murinae</taxon>
        <taxon>Mus</taxon>
        <taxon>Mus</taxon>
    </lineage>
</organism>
<reference key="1">
    <citation type="journal article" date="2000" name="Hum. Mol. Genet.">
        <title>Functional analysis of ARHGAP6, a novel GTPase-activating protein for RhoA.</title>
        <authorList>
            <person name="Prakash S.K."/>
            <person name="Paylor R."/>
            <person name="Jenna S."/>
            <person name="Lamarche-Vane N."/>
            <person name="Armstrong D.L."/>
            <person name="Xu B."/>
            <person name="Mancini M.A."/>
            <person name="Zoghbi H.Y."/>
        </authorList>
    </citation>
    <scope>NUCLEOTIDE SEQUENCE [MRNA] (ISOFORMS 1 AND 2)</scope>
    <scope>SEQUENCE REVISION TO 600-601</scope>
    <source>
        <strain>129/Sv</strain>
    </source>
</reference>
<reference key="2">
    <citation type="journal article" date="2005" name="Science">
        <title>The transcriptional landscape of the mammalian genome.</title>
        <authorList>
            <person name="Carninci P."/>
            <person name="Kasukawa T."/>
            <person name="Katayama S."/>
            <person name="Gough J."/>
            <person name="Frith M.C."/>
            <person name="Maeda N."/>
            <person name="Oyama R."/>
            <person name="Ravasi T."/>
            <person name="Lenhard B."/>
            <person name="Wells C."/>
            <person name="Kodzius R."/>
            <person name="Shimokawa K."/>
            <person name="Bajic V.B."/>
            <person name="Brenner S.E."/>
            <person name="Batalov S."/>
            <person name="Forrest A.R."/>
            <person name="Zavolan M."/>
            <person name="Davis M.J."/>
            <person name="Wilming L.G."/>
            <person name="Aidinis V."/>
            <person name="Allen J.E."/>
            <person name="Ambesi-Impiombato A."/>
            <person name="Apweiler R."/>
            <person name="Aturaliya R.N."/>
            <person name="Bailey T.L."/>
            <person name="Bansal M."/>
            <person name="Baxter L."/>
            <person name="Beisel K.W."/>
            <person name="Bersano T."/>
            <person name="Bono H."/>
            <person name="Chalk A.M."/>
            <person name="Chiu K.P."/>
            <person name="Choudhary V."/>
            <person name="Christoffels A."/>
            <person name="Clutterbuck D.R."/>
            <person name="Crowe M.L."/>
            <person name="Dalla E."/>
            <person name="Dalrymple B.P."/>
            <person name="de Bono B."/>
            <person name="Della Gatta G."/>
            <person name="di Bernardo D."/>
            <person name="Down T."/>
            <person name="Engstrom P."/>
            <person name="Fagiolini M."/>
            <person name="Faulkner G."/>
            <person name="Fletcher C.F."/>
            <person name="Fukushima T."/>
            <person name="Furuno M."/>
            <person name="Futaki S."/>
            <person name="Gariboldi M."/>
            <person name="Georgii-Hemming P."/>
            <person name="Gingeras T.R."/>
            <person name="Gojobori T."/>
            <person name="Green R.E."/>
            <person name="Gustincich S."/>
            <person name="Harbers M."/>
            <person name="Hayashi Y."/>
            <person name="Hensch T.K."/>
            <person name="Hirokawa N."/>
            <person name="Hill D."/>
            <person name="Huminiecki L."/>
            <person name="Iacono M."/>
            <person name="Ikeo K."/>
            <person name="Iwama A."/>
            <person name="Ishikawa T."/>
            <person name="Jakt M."/>
            <person name="Kanapin A."/>
            <person name="Katoh M."/>
            <person name="Kawasawa Y."/>
            <person name="Kelso J."/>
            <person name="Kitamura H."/>
            <person name="Kitano H."/>
            <person name="Kollias G."/>
            <person name="Krishnan S.P."/>
            <person name="Kruger A."/>
            <person name="Kummerfeld S.K."/>
            <person name="Kurochkin I.V."/>
            <person name="Lareau L.F."/>
            <person name="Lazarevic D."/>
            <person name="Lipovich L."/>
            <person name="Liu J."/>
            <person name="Liuni S."/>
            <person name="McWilliam S."/>
            <person name="Madan Babu M."/>
            <person name="Madera M."/>
            <person name="Marchionni L."/>
            <person name="Matsuda H."/>
            <person name="Matsuzawa S."/>
            <person name="Miki H."/>
            <person name="Mignone F."/>
            <person name="Miyake S."/>
            <person name="Morris K."/>
            <person name="Mottagui-Tabar S."/>
            <person name="Mulder N."/>
            <person name="Nakano N."/>
            <person name="Nakauchi H."/>
            <person name="Ng P."/>
            <person name="Nilsson R."/>
            <person name="Nishiguchi S."/>
            <person name="Nishikawa S."/>
            <person name="Nori F."/>
            <person name="Ohara O."/>
            <person name="Okazaki Y."/>
            <person name="Orlando V."/>
            <person name="Pang K.C."/>
            <person name="Pavan W.J."/>
            <person name="Pavesi G."/>
            <person name="Pesole G."/>
            <person name="Petrovsky N."/>
            <person name="Piazza S."/>
            <person name="Reed J."/>
            <person name="Reid J.F."/>
            <person name="Ring B.Z."/>
            <person name="Ringwald M."/>
            <person name="Rost B."/>
            <person name="Ruan Y."/>
            <person name="Salzberg S.L."/>
            <person name="Sandelin A."/>
            <person name="Schneider C."/>
            <person name="Schoenbach C."/>
            <person name="Sekiguchi K."/>
            <person name="Semple C.A."/>
            <person name="Seno S."/>
            <person name="Sessa L."/>
            <person name="Sheng Y."/>
            <person name="Shibata Y."/>
            <person name="Shimada H."/>
            <person name="Shimada K."/>
            <person name="Silva D."/>
            <person name="Sinclair B."/>
            <person name="Sperling S."/>
            <person name="Stupka E."/>
            <person name="Sugiura K."/>
            <person name="Sultana R."/>
            <person name="Takenaka Y."/>
            <person name="Taki K."/>
            <person name="Tammoja K."/>
            <person name="Tan S.L."/>
            <person name="Tang S."/>
            <person name="Taylor M.S."/>
            <person name="Tegner J."/>
            <person name="Teichmann S.A."/>
            <person name="Ueda H.R."/>
            <person name="van Nimwegen E."/>
            <person name="Verardo R."/>
            <person name="Wei C.L."/>
            <person name="Yagi K."/>
            <person name="Yamanishi H."/>
            <person name="Zabarovsky E."/>
            <person name="Zhu S."/>
            <person name="Zimmer A."/>
            <person name="Hide W."/>
            <person name="Bult C."/>
            <person name="Grimmond S.M."/>
            <person name="Teasdale R.D."/>
            <person name="Liu E.T."/>
            <person name="Brusic V."/>
            <person name="Quackenbush J."/>
            <person name="Wahlestedt C."/>
            <person name="Mattick J.S."/>
            <person name="Hume D.A."/>
            <person name="Kai C."/>
            <person name="Sasaki D."/>
            <person name="Tomaru Y."/>
            <person name="Fukuda S."/>
            <person name="Kanamori-Katayama M."/>
            <person name="Suzuki M."/>
            <person name="Aoki J."/>
            <person name="Arakawa T."/>
            <person name="Iida J."/>
            <person name="Imamura K."/>
            <person name="Itoh M."/>
            <person name="Kato T."/>
            <person name="Kawaji H."/>
            <person name="Kawagashira N."/>
            <person name="Kawashima T."/>
            <person name="Kojima M."/>
            <person name="Kondo S."/>
            <person name="Konno H."/>
            <person name="Nakano K."/>
            <person name="Ninomiya N."/>
            <person name="Nishio T."/>
            <person name="Okada M."/>
            <person name="Plessy C."/>
            <person name="Shibata K."/>
            <person name="Shiraki T."/>
            <person name="Suzuki S."/>
            <person name="Tagami M."/>
            <person name="Waki K."/>
            <person name="Watahiki A."/>
            <person name="Okamura-Oho Y."/>
            <person name="Suzuki H."/>
            <person name="Kawai J."/>
            <person name="Hayashizaki Y."/>
        </authorList>
    </citation>
    <scope>NUCLEOTIDE SEQUENCE [LARGE SCALE MRNA] (ISOFORMS 3 AND 4)</scope>
    <source>
        <strain>C57BL/6J</strain>
        <tissue>Head</tissue>
        <tissue>Lung</tissue>
        <tissue>Testis</tissue>
    </source>
</reference>
<reference key="3">
    <citation type="journal article" date="2009" name="PLoS Biol.">
        <title>Lineage-specific biology revealed by a finished genome assembly of the mouse.</title>
        <authorList>
            <person name="Church D.M."/>
            <person name="Goodstadt L."/>
            <person name="Hillier L.W."/>
            <person name="Zody M.C."/>
            <person name="Goldstein S."/>
            <person name="She X."/>
            <person name="Bult C.J."/>
            <person name="Agarwala R."/>
            <person name="Cherry J.L."/>
            <person name="DiCuccio M."/>
            <person name="Hlavina W."/>
            <person name="Kapustin Y."/>
            <person name="Meric P."/>
            <person name="Maglott D."/>
            <person name="Birtle Z."/>
            <person name="Marques A.C."/>
            <person name="Graves T."/>
            <person name="Zhou S."/>
            <person name="Teague B."/>
            <person name="Potamousis K."/>
            <person name="Churas C."/>
            <person name="Place M."/>
            <person name="Herschleb J."/>
            <person name="Runnheim R."/>
            <person name="Forrest D."/>
            <person name="Amos-Landgraf J."/>
            <person name="Schwartz D.C."/>
            <person name="Cheng Z."/>
            <person name="Lindblad-Toh K."/>
            <person name="Eichler E.E."/>
            <person name="Ponting C.P."/>
        </authorList>
    </citation>
    <scope>NUCLEOTIDE SEQUENCE [LARGE SCALE GENOMIC DNA]</scope>
    <source>
        <strain>C57BL/6J</strain>
    </source>
</reference>
<reference key="4">
    <citation type="journal article" date="1997" name="Genomics">
        <title>Cloning and characterization of a novel rho-type GTPase-activating protein gene (ARHGAP6) from the critical region for microphthalmia with linear skin defects.</title>
        <authorList>
            <person name="Schaefer L."/>
            <person name="Prakash S.K."/>
            <person name="Zoghbi H.Y."/>
        </authorList>
    </citation>
    <scope>NUCLEOTIDE SEQUENCE [MRNA] OF 280-660 (ISOFORM 1)</scope>
    <source>
        <strain>129/Sv</strain>
    </source>
</reference>
<reference key="5">
    <citation type="journal article" date="2007" name="Proc. Natl. Acad. Sci. U.S.A.">
        <title>Large-scale phosphorylation analysis of mouse liver.</title>
        <authorList>
            <person name="Villen J."/>
            <person name="Beausoleil S.A."/>
            <person name="Gerber S.A."/>
            <person name="Gygi S.P."/>
        </authorList>
    </citation>
    <scope>PHOSPHORYLATION [LARGE SCALE ANALYSIS] AT SER-675</scope>
    <scope>IDENTIFICATION BY MASS SPECTROMETRY [LARGE SCALE ANALYSIS]</scope>
    <source>
        <tissue>Liver</tissue>
    </source>
</reference>
<reference key="6">
    <citation type="journal article" date="2010" name="Cell">
        <title>A tissue-specific atlas of mouse protein phosphorylation and expression.</title>
        <authorList>
            <person name="Huttlin E.L."/>
            <person name="Jedrychowski M.P."/>
            <person name="Elias J.E."/>
            <person name="Goswami T."/>
            <person name="Rad R."/>
            <person name="Beausoleil S.A."/>
            <person name="Villen J."/>
            <person name="Haas W."/>
            <person name="Sowa M.E."/>
            <person name="Gygi S.P."/>
        </authorList>
    </citation>
    <scope>PHOSPHORYLATION [LARGE SCALE ANALYSIS] AT SER-37; SER-669; SER-675; SER-713 AND SER-824</scope>
    <scope>IDENTIFICATION BY MASS SPECTROMETRY [LARGE SCALE ANALYSIS]</scope>
    <source>
        <tissue>Heart</tissue>
        <tissue>Kidney</tissue>
        <tissue>Lung</tissue>
        <tissue>Spleen</tissue>
    </source>
</reference>
<sequence>MSAQSLLHSVFSCSSPASGGTASAKGFSKRKLRQTRSLDPALIGGCGSEMGAEGGLRGSTVSRLHSPQLLAEGLGSRLASSPRSQHLRATRFQTPRPLCSSFSTPSTPQEKSPSGSFHFDYEVPLSRSGLKKSMAWDLPSVLAGSGSASSRSPASILSSSGGGPNGIFSSPRRWLQQRKFQPPPNSRSHPYVVWRSEGDFTWNSMSGRSVRLRSVPIQSLSELERARLQEVAFYQLQQDCDLGCQITIPKDGQKRKKSLRKKLDSLGKEKNKDKEFIPQAFGMPLSQVIANDRAYKLKQDLQREEQKDASSDFVSSLLPFGNKKQNKELSSSNSSLSSTSETPNESTSPNTPEPAPRARRRGAMSVDSITDLDDNQSRLLEALQLSLPAEAQSKKEKARDKKLSLNPIYRQVPRLVDSCCQHLEKHGLQTVGIFRVGSSKKRVRQLREEFDRGVDVCLEEEHSVHDVAALLKEFLRDMPDPLLTRELYTAFINTLLLEPEEQLGTLQLLIYLLPPCNCDTLHRLLQFLSIVARHADDNVSKDGQEVTGNKMTSLNLATIFGPNLLHKQKSSDKEYSVQSSARAEESTAIIAVVQKMIENYEALFMVPPDLQNEVLISLLETDPDVVDYLLRRKASQSSSPDILQTEVSFSMGGRHSSTDSNKASSGDISPYDNNSPVLSERSLLAMQEDRARGGSEKLYKVPEQYTLVGHLSSPKSKSRESSPGPRLGKEMSEEPFNIWGTWHSTLKSGSKDPGMTGSYGDIFESSSLRPRPCSLSQGNLSLNWPRCQGSPTGLDSGTQVIRRTQTAATVEQCSVHLPVSRVCSTPHIQDGSRGTRRPAASSDPFLSLNSTEDLAEGKEDVAWLQSQARPVYQRPQESGKDDRRPPPPYPGSGKPATTSAQLPLEPPLWRLQRHEEGSETAVEGGQQASGEHQTRPKKLSSAYSLSASEQDKQNLGEASWLDWQRERWQIWELLSTDNPDALPETLV</sequence>
<dbReference type="EMBL" id="AF012273">
    <property type="protein sequence ID" value="AAC53522.2"/>
    <property type="molecule type" value="mRNA"/>
</dbReference>
<dbReference type="EMBL" id="AF177664">
    <property type="protein sequence ID" value="AAD55086.1"/>
    <property type="molecule type" value="mRNA"/>
</dbReference>
<dbReference type="EMBL" id="AK048162">
    <property type="protein sequence ID" value="BAC33263.1"/>
    <property type="status" value="ALT_INIT"/>
    <property type="molecule type" value="mRNA"/>
</dbReference>
<dbReference type="EMBL" id="AK048507">
    <property type="protein sequence ID" value="BAC33352.1"/>
    <property type="molecule type" value="mRNA"/>
</dbReference>
<dbReference type="EMBL" id="AK077996">
    <property type="protein sequence ID" value="BAC37093.1"/>
    <property type="status" value="ALT_INIT"/>
    <property type="molecule type" value="mRNA"/>
</dbReference>
<dbReference type="EMBL" id="AK166015">
    <property type="protein sequence ID" value="BAE38520.1"/>
    <property type="molecule type" value="mRNA"/>
</dbReference>
<dbReference type="EMBL" id="AL663026">
    <property type="status" value="NOT_ANNOTATED_CDS"/>
    <property type="molecule type" value="Genomic_DNA"/>
</dbReference>
<dbReference type="EMBL" id="AL663056">
    <property type="status" value="NOT_ANNOTATED_CDS"/>
    <property type="molecule type" value="Genomic_DNA"/>
</dbReference>
<dbReference type="EMBL" id="AL805974">
    <property type="status" value="NOT_ANNOTATED_CDS"/>
    <property type="molecule type" value="Genomic_DNA"/>
</dbReference>
<dbReference type="EMBL" id="AL831750">
    <property type="status" value="NOT_ANNOTATED_CDS"/>
    <property type="molecule type" value="Genomic_DNA"/>
</dbReference>
<dbReference type="CCDS" id="CCDS30534.1">
    <molecule id="O54834-1"/>
</dbReference>
<dbReference type="CCDS" id="CCDS41212.1">
    <molecule id="O54834-3"/>
</dbReference>
<dbReference type="CCDS" id="CCDS72472.1">
    <molecule id="O54834-4"/>
</dbReference>
<dbReference type="RefSeq" id="NP_001274459.1">
    <molecule id="O54834-4"/>
    <property type="nucleotide sequence ID" value="NM_001287530.1"/>
</dbReference>
<dbReference type="RefSeq" id="NP_033837.2">
    <molecule id="O54834-1"/>
    <property type="nucleotide sequence ID" value="NM_009707.4"/>
</dbReference>
<dbReference type="RefSeq" id="NP_848869.1">
    <molecule id="O54834-3"/>
    <property type="nucleotide sequence ID" value="NM_178754.3"/>
</dbReference>
<dbReference type="RefSeq" id="XP_006528757.1">
    <molecule id="O54834-1"/>
    <property type="nucleotide sequence ID" value="XM_006528694.2"/>
</dbReference>
<dbReference type="RefSeq" id="XP_011246085.1">
    <property type="nucleotide sequence ID" value="XM_011247783.1"/>
</dbReference>
<dbReference type="SMR" id="O54834"/>
<dbReference type="BioGRID" id="198200">
    <property type="interactions" value="16"/>
</dbReference>
<dbReference type="FunCoup" id="O54834">
    <property type="interactions" value="926"/>
</dbReference>
<dbReference type="IntAct" id="O54834">
    <property type="interactions" value="7"/>
</dbReference>
<dbReference type="STRING" id="10090.ENSMUSP00000033721"/>
<dbReference type="GlyGen" id="O54834">
    <property type="glycosylation" value="2 sites, 1 N-linked glycan (1 site)"/>
</dbReference>
<dbReference type="iPTMnet" id="O54834"/>
<dbReference type="PhosphoSitePlus" id="O54834"/>
<dbReference type="PaxDb" id="10090-ENSMUSP00000033721"/>
<dbReference type="PeptideAtlas" id="O54834"/>
<dbReference type="ProteomicsDB" id="254865">
    <molecule id="O54834-1"/>
</dbReference>
<dbReference type="ProteomicsDB" id="254866">
    <molecule id="O54834-2"/>
</dbReference>
<dbReference type="ProteomicsDB" id="254867">
    <molecule id="O54834-3"/>
</dbReference>
<dbReference type="ProteomicsDB" id="254868">
    <molecule id="O54834-4"/>
</dbReference>
<dbReference type="Antibodypedia" id="23727">
    <property type="antibodies" value="67 antibodies from 20 providers"/>
</dbReference>
<dbReference type="DNASU" id="11856"/>
<dbReference type="Ensembl" id="ENSMUST00000033721.13">
    <molecule id="O54834-1"/>
    <property type="protein sequence ID" value="ENSMUSP00000033721.7"/>
    <property type="gene ID" value="ENSMUSG00000031355.17"/>
</dbReference>
<dbReference type="Ensembl" id="ENSMUST00000112127.2">
    <molecule id="O54834-4"/>
    <property type="protein sequence ID" value="ENSMUSP00000107755.2"/>
    <property type="gene ID" value="ENSMUSG00000031355.17"/>
</dbReference>
<dbReference type="Ensembl" id="ENSMUST00000112131.9">
    <molecule id="O54834-3"/>
    <property type="protein sequence ID" value="ENSMUSP00000107759.3"/>
    <property type="gene ID" value="ENSMUSG00000031355.17"/>
</dbReference>
<dbReference type="GeneID" id="11856"/>
<dbReference type="KEGG" id="mmu:11856"/>
<dbReference type="UCSC" id="uc009uxj.2">
    <molecule id="O54834-1"/>
    <property type="organism name" value="mouse"/>
</dbReference>
<dbReference type="UCSC" id="uc009uxo.2">
    <molecule id="O54834-3"/>
    <property type="organism name" value="mouse"/>
</dbReference>
<dbReference type="UCSC" id="uc009uxq.2">
    <molecule id="O54834-4"/>
    <property type="organism name" value="mouse"/>
</dbReference>
<dbReference type="AGR" id="MGI:1196332"/>
<dbReference type="CTD" id="395"/>
<dbReference type="MGI" id="MGI:1196332">
    <property type="gene designation" value="Arhgap6"/>
</dbReference>
<dbReference type="VEuPathDB" id="HostDB:ENSMUSG00000031355"/>
<dbReference type="eggNOG" id="KOG2710">
    <property type="taxonomic scope" value="Eukaryota"/>
</dbReference>
<dbReference type="GeneTree" id="ENSGT00940000153904"/>
<dbReference type="HOGENOM" id="CLU_012874_0_0_1"/>
<dbReference type="InParanoid" id="O54834"/>
<dbReference type="OMA" id="WHSTLKC"/>
<dbReference type="OrthoDB" id="10024839at2759"/>
<dbReference type="PhylomeDB" id="O54834"/>
<dbReference type="TreeFam" id="TF316710"/>
<dbReference type="Reactome" id="R-MMU-8980692">
    <property type="pathway name" value="RHOA GTPase cycle"/>
</dbReference>
<dbReference type="Reactome" id="R-MMU-9013423">
    <property type="pathway name" value="RAC3 GTPase cycle"/>
</dbReference>
<dbReference type="BioGRID-ORCS" id="11856">
    <property type="hits" value="2 hits in 45 CRISPR screens"/>
</dbReference>
<dbReference type="ChiTaRS" id="Arhgap6">
    <property type="organism name" value="mouse"/>
</dbReference>
<dbReference type="PRO" id="PR:O54834"/>
<dbReference type="Proteomes" id="UP000000589">
    <property type="component" value="Chromosome X"/>
</dbReference>
<dbReference type="RNAct" id="O54834">
    <property type="molecule type" value="protein"/>
</dbReference>
<dbReference type="Bgee" id="ENSMUSG00000031355">
    <property type="expression patterns" value="Expressed in lateral septal nucleus and 206 other cell types or tissues"/>
</dbReference>
<dbReference type="ExpressionAtlas" id="O54834">
    <property type="expression patterns" value="baseline and differential"/>
</dbReference>
<dbReference type="GO" id="GO:0015629">
    <property type="term" value="C:actin cytoskeleton"/>
    <property type="evidence" value="ECO:0000314"/>
    <property type="project" value="MGI"/>
</dbReference>
<dbReference type="GO" id="GO:0005829">
    <property type="term" value="C:cytosol"/>
    <property type="evidence" value="ECO:0007669"/>
    <property type="project" value="Ensembl"/>
</dbReference>
<dbReference type="GO" id="GO:0072686">
    <property type="term" value="C:mitotic spindle"/>
    <property type="evidence" value="ECO:0007669"/>
    <property type="project" value="Ensembl"/>
</dbReference>
<dbReference type="GO" id="GO:0005096">
    <property type="term" value="F:GTPase activator activity"/>
    <property type="evidence" value="ECO:0000314"/>
    <property type="project" value="MGI"/>
</dbReference>
<dbReference type="GO" id="GO:0017124">
    <property type="term" value="F:SH3 domain binding"/>
    <property type="evidence" value="ECO:0007669"/>
    <property type="project" value="UniProtKB-KW"/>
</dbReference>
<dbReference type="GO" id="GO:0007015">
    <property type="term" value="P:actin filament organization"/>
    <property type="evidence" value="ECO:0000314"/>
    <property type="project" value="MGI"/>
</dbReference>
<dbReference type="GO" id="GO:0048041">
    <property type="term" value="P:focal adhesion assembly"/>
    <property type="evidence" value="ECO:0000314"/>
    <property type="project" value="MGI"/>
</dbReference>
<dbReference type="GO" id="GO:0051895">
    <property type="term" value="P:negative regulation of focal adhesion assembly"/>
    <property type="evidence" value="ECO:0007669"/>
    <property type="project" value="Ensembl"/>
</dbReference>
<dbReference type="GO" id="GO:0051497">
    <property type="term" value="P:negative regulation of stress fiber assembly"/>
    <property type="evidence" value="ECO:0007669"/>
    <property type="project" value="Ensembl"/>
</dbReference>
<dbReference type="GO" id="GO:1902533">
    <property type="term" value="P:positive regulation of intracellular signal transduction"/>
    <property type="evidence" value="ECO:0000314"/>
    <property type="project" value="BHF-UCL"/>
</dbReference>
<dbReference type="GO" id="GO:0007165">
    <property type="term" value="P:signal transduction"/>
    <property type="evidence" value="ECO:0007669"/>
    <property type="project" value="InterPro"/>
</dbReference>
<dbReference type="CDD" id="cd04376">
    <property type="entry name" value="RhoGAP_ARHGAP6"/>
    <property type="match status" value="1"/>
</dbReference>
<dbReference type="FunFam" id="1.10.555.10:FF:000017">
    <property type="entry name" value="Rho GTPase activating protein 6"/>
    <property type="match status" value="1"/>
</dbReference>
<dbReference type="Gene3D" id="1.10.555.10">
    <property type="entry name" value="Rho GTPase activation protein"/>
    <property type="match status" value="1"/>
</dbReference>
<dbReference type="InterPro" id="IPR041852">
    <property type="entry name" value="ARHGAP6_RhoGAP"/>
</dbReference>
<dbReference type="InterPro" id="IPR008936">
    <property type="entry name" value="Rho_GTPase_activation_prot"/>
</dbReference>
<dbReference type="InterPro" id="IPR037863">
    <property type="entry name" value="RHOGAP6/36"/>
</dbReference>
<dbReference type="InterPro" id="IPR000198">
    <property type="entry name" value="RhoGAP_dom"/>
</dbReference>
<dbReference type="PANTHER" id="PTHR12635:SF6">
    <property type="entry name" value="RHO GTPASE-ACTIVATING PROTEIN 6"/>
    <property type="match status" value="1"/>
</dbReference>
<dbReference type="PANTHER" id="PTHR12635">
    <property type="entry name" value="RHO-GTPASE-ACTIVATING PROTEIN 6 FAMILY MEMBER"/>
    <property type="match status" value="1"/>
</dbReference>
<dbReference type="Pfam" id="PF00620">
    <property type="entry name" value="RhoGAP"/>
    <property type="match status" value="1"/>
</dbReference>
<dbReference type="SMART" id="SM00324">
    <property type="entry name" value="RhoGAP"/>
    <property type="match status" value="1"/>
</dbReference>
<dbReference type="SUPFAM" id="SSF48350">
    <property type="entry name" value="GTPase activation domain, GAP"/>
    <property type="match status" value="1"/>
</dbReference>
<dbReference type="PROSITE" id="PS50238">
    <property type="entry name" value="RHOGAP"/>
    <property type="match status" value="1"/>
</dbReference>